<reference key="1">
    <citation type="journal article" date="2016" name="Genome Announc.">
        <title>Complete genome sequence of Alkaliphilus metalliredigens strain QYMF, an alkaliphilic and metal-reducing bacterium isolated from borax-contaminated leachate ponds.</title>
        <authorList>
            <person name="Hwang C."/>
            <person name="Copeland A."/>
            <person name="Lucas S."/>
            <person name="Lapidus A."/>
            <person name="Barry K."/>
            <person name="Detter J.C."/>
            <person name="Glavina Del Rio T."/>
            <person name="Hammon N."/>
            <person name="Israni S."/>
            <person name="Dalin E."/>
            <person name="Tice H."/>
            <person name="Pitluck S."/>
            <person name="Chertkov O."/>
            <person name="Brettin T."/>
            <person name="Bruce D."/>
            <person name="Han C."/>
            <person name="Schmutz J."/>
            <person name="Larimer F."/>
            <person name="Land M.L."/>
            <person name="Hauser L."/>
            <person name="Kyrpides N."/>
            <person name="Mikhailova N."/>
            <person name="Ye Q."/>
            <person name="Zhou J."/>
            <person name="Richardson P."/>
            <person name="Fields M.W."/>
        </authorList>
    </citation>
    <scope>NUCLEOTIDE SEQUENCE [LARGE SCALE GENOMIC DNA]</scope>
    <source>
        <strain>QYMF</strain>
    </source>
</reference>
<feature type="chain" id="PRO_1000073001" description="Putative pyruvate, phosphate dikinase regulatory protein">
    <location>
        <begin position="1"/>
        <end position="277"/>
    </location>
</feature>
<feature type="binding site" evidence="1">
    <location>
        <begin position="151"/>
        <end position="158"/>
    </location>
    <ligand>
        <name>ADP</name>
        <dbReference type="ChEBI" id="CHEBI:456216"/>
    </ligand>
</feature>
<keyword id="KW-0418">Kinase</keyword>
<keyword id="KW-0547">Nucleotide-binding</keyword>
<keyword id="KW-1185">Reference proteome</keyword>
<keyword id="KW-0723">Serine/threonine-protein kinase</keyword>
<keyword id="KW-0808">Transferase</keyword>
<evidence type="ECO:0000255" key="1">
    <source>
        <dbReference type="HAMAP-Rule" id="MF_00921"/>
    </source>
</evidence>
<organism>
    <name type="scientific">Alkaliphilus metalliredigens (strain QYMF)</name>
    <dbReference type="NCBI Taxonomy" id="293826"/>
    <lineage>
        <taxon>Bacteria</taxon>
        <taxon>Bacillati</taxon>
        <taxon>Bacillota</taxon>
        <taxon>Clostridia</taxon>
        <taxon>Peptostreptococcales</taxon>
        <taxon>Natronincolaceae</taxon>
        <taxon>Alkaliphilus</taxon>
    </lineage>
</organism>
<name>PDRP_ALKMQ</name>
<protein>
    <recommendedName>
        <fullName evidence="1">Putative pyruvate, phosphate dikinase regulatory protein</fullName>
        <shortName evidence="1">PPDK regulatory protein</shortName>
        <ecNumber evidence="1">2.7.11.32</ecNumber>
        <ecNumber evidence="1">2.7.4.27</ecNumber>
    </recommendedName>
</protein>
<proteinExistence type="inferred from homology"/>
<comment type="function">
    <text evidence="1">Bifunctional serine/threonine kinase and phosphorylase involved in the regulation of the pyruvate, phosphate dikinase (PPDK) by catalyzing its phosphorylation/dephosphorylation.</text>
</comment>
<comment type="catalytic activity">
    <reaction evidence="1">
        <text>N(tele)-phospho-L-histidyl/L-threonyl-[pyruvate, phosphate dikinase] + ADP = N(tele)-phospho-L-histidyl/O-phospho-L-threonyl-[pyruvate, phosphate dikinase] + AMP + H(+)</text>
        <dbReference type="Rhea" id="RHEA:43692"/>
        <dbReference type="Rhea" id="RHEA-COMP:10650"/>
        <dbReference type="Rhea" id="RHEA-COMP:10651"/>
        <dbReference type="ChEBI" id="CHEBI:15378"/>
        <dbReference type="ChEBI" id="CHEBI:30013"/>
        <dbReference type="ChEBI" id="CHEBI:61977"/>
        <dbReference type="ChEBI" id="CHEBI:83586"/>
        <dbReference type="ChEBI" id="CHEBI:456215"/>
        <dbReference type="ChEBI" id="CHEBI:456216"/>
        <dbReference type="EC" id="2.7.11.32"/>
    </reaction>
</comment>
<comment type="catalytic activity">
    <reaction evidence="1">
        <text>N(tele)-phospho-L-histidyl/O-phospho-L-threonyl-[pyruvate, phosphate dikinase] + phosphate + H(+) = N(tele)-phospho-L-histidyl/L-threonyl-[pyruvate, phosphate dikinase] + diphosphate</text>
        <dbReference type="Rhea" id="RHEA:43696"/>
        <dbReference type="Rhea" id="RHEA-COMP:10650"/>
        <dbReference type="Rhea" id="RHEA-COMP:10651"/>
        <dbReference type="ChEBI" id="CHEBI:15378"/>
        <dbReference type="ChEBI" id="CHEBI:30013"/>
        <dbReference type="ChEBI" id="CHEBI:33019"/>
        <dbReference type="ChEBI" id="CHEBI:43474"/>
        <dbReference type="ChEBI" id="CHEBI:61977"/>
        <dbReference type="ChEBI" id="CHEBI:83586"/>
        <dbReference type="EC" id="2.7.4.27"/>
    </reaction>
</comment>
<comment type="similarity">
    <text evidence="1">Belongs to the pyruvate, phosphate/water dikinase regulatory protein family. PDRP subfamily.</text>
</comment>
<accession>A6TSJ2</accession>
<dbReference type="EC" id="2.7.11.32" evidence="1"/>
<dbReference type="EC" id="2.7.4.27" evidence="1"/>
<dbReference type="EMBL" id="CP000724">
    <property type="protein sequence ID" value="ABR49160.1"/>
    <property type="molecule type" value="Genomic_DNA"/>
</dbReference>
<dbReference type="RefSeq" id="WP_012064127.1">
    <property type="nucleotide sequence ID" value="NC_009633.1"/>
</dbReference>
<dbReference type="SMR" id="A6TSJ2"/>
<dbReference type="STRING" id="293826.Amet_3020"/>
<dbReference type="KEGG" id="amt:Amet_3020"/>
<dbReference type="eggNOG" id="COG1806">
    <property type="taxonomic scope" value="Bacteria"/>
</dbReference>
<dbReference type="HOGENOM" id="CLU_046206_2_1_9"/>
<dbReference type="OrthoDB" id="9782201at2"/>
<dbReference type="Proteomes" id="UP000001572">
    <property type="component" value="Chromosome"/>
</dbReference>
<dbReference type="GO" id="GO:0043531">
    <property type="term" value="F:ADP binding"/>
    <property type="evidence" value="ECO:0007669"/>
    <property type="project" value="UniProtKB-UniRule"/>
</dbReference>
<dbReference type="GO" id="GO:0005524">
    <property type="term" value="F:ATP binding"/>
    <property type="evidence" value="ECO:0007669"/>
    <property type="project" value="InterPro"/>
</dbReference>
<dbReference type="GO" id="GO:0016776">
    <property type="term" value="F:phosphotransferase activity, phosphate group as acceptor"/>
    <property type="evidence" value="ECO:0007669"/>
    <property type="project" value="UniProtKB-UniRule"/>
</dbReference>
<dbReference type="GO" id="GO:0004674">
    <property type="term" value="F:protein serine/threonine kinase activity"/>
    <property type="evidence" value="ECO:0007669"/>
    <property type="project" value="UniProtKB-UniRule"/>
</dbReference>
<dbReference type="HAMAP" id="MF_00921">
    <property type="entry name" value="PDRP"/>
    <property type="match status" value="1"/>
</dbReference>
<dbReference type="InterPro" id="IPR005177">
    <property type="entry name" value="Kinase-pyrophosphorylase"/>
</dbReference>
<dbReference type="InterPro" id="IPR026565">
    <property type="entry name" value="PPDK_reg"/>
</dbReference>
<dbReference type="NCBIfam" id="NF003742">
    <property type="entry name" value="PRK05339.1"/>
    <property type="match status" value="1"/>
</dbReference>
<dbReference type="PANTHER" id="PTHR31756">
    <property type="entry name" value="PYRUVATE, PHOSPHATE DIKINASE REGULATORY PROTEIN 1, CHLOROPLASTIC"/>
    <property type="match status" value="1"/>
</dbReference>
<dbReference type="PANTHER" id="PTHR31756:SF3">
    <property type="entry name" value="PYRUVATE, PHOSPHATE DIKINASE REGULATORY PROTEIN 1, CHLOROPLASTIC"/>
    <property type="match status" value="1"/>
</dbReference>
<dbReference type="Pfam" id="PF03618">
    <property type="entry name" value="Kinase-PPPase"/>
    <property type="match status" value="1"/>
</dbReference>
<gene>
    <name type="ordered locus">Amet_3020</name>
</gene>
<sequence length="277" mass="31462">MNNENLVIYILSDSIGETAEQVAKAAISQFDTEDYEIRRFPFITEKHHIDEMLQEAKKENSVIVFTMVVEELRNYIMEEAEKMQIRSIDIMSPVLHAMGGALTTTPKREPGLIRRLDEKYFRKVEAIEFAVKYDDGKDSRGLAKADIVLVGISRTSKTPLSMYLAHRNMKVANVPLVPEVTPPKELYEVPSQKIIGLTTNPIKLIEIRQERLKALGLKNEASYASMERILEELEYAEGIMKRIGCPVIDVSTKAVEESAGIILEIFRDRGYNMPNGR</sequence>